<feature type="chain" id="PRO_0000146504" description="Small ribosomal subunit protein uS10">
    <location>
        <begin position="1"/>
        <end position="103"/>
    </location>
</feature>
<reference key="1">
    <citation type="journal article" date="2003" name="Nat. Genet.">
        <title>Comparative analysis of the genome sequences of Bordetella pertussis, Bordetella parapertussis and Bordetella bronchiseptica.</title>
        <authorList>
            <person name="Parkhill J."/>
            <person name="Sebaihia M."/>
            <person name="Preston A."/>
            <person name="Murphy L.D."/>
            <person name="Thomson N.R."/>
            <person name="Harris D.E."/>
            <person name="Holden M.T.G."/>
            <person name="Churcher C.M."/>
            <person name="Bentley S.D."/>
            <person name="Mungall K.L."/>
            <person name="Cerdeno-Tarraga A.-M."/>
            <person name="Temple L."/>
            <person name="James K.D."/>
            <person name="Harris B."/>
            <person name="Quail M.A."/>
            <person name="Achtman M."/>
            <person name="Atkin R."/>
            <person name="Baker S."/>
            <person name="Basham D."/>
            <person name="Bason N."/>
            <person name="Cherevach I."/>
            <person name="Chillingworth T."/>
            <person name="Collins M."/>
            <person name="Cronin A."/>
            <person name="Davis P."/>
            <person name="Doggett J."/>
            <person name="Feltwell T."/>
            <person name="Goble A."/>
            <person name="Hamlin N."/>
            <person name="Hauser H."/>
            <person name="Holroyd S."/>
            <person name="Jagels K."/>
            <person name="Leather S."/>
            <person name="Moule S."/>
            <person name="Norberczak H."/>
            <person name="O'Neil S."/>
            <person name="Ormond D."/>
            <person name="Price C."/>
            <person name="Rabbinowitsch E."/>
            <person name="Rutter S."/>
            <person name="Sanders M."/>
            <person name="Saunders D."/>
            <person name="Seeger K."/>
            <person name="Sharp S."/>
            <person name="Simmonds M."/>
            <person name="Skelton J."/>
            <person name="Squares R."/>
            <person name="Squares S."/>
            <person name="Stevens K."/>
            <person name="Unwin L."/>
            <person name="Whitehead S."/>
            <person name="Barrell B.G."/>
            <person name="Maskell D.J."/>
        </authorList>
    </citation>
    <scope>NUCLEOTIDE SEQUENCE [LARGE SCALE GENOMIC DNA]</scope>
    <source>
        <strain>Tohama I / ATCC BAA-589 / NCTC 13251</strain>
    </source>
</reference>
<keyword id="KW-1185">Reference proteome</keyword>
<keyword id="KW-0687">Ribonucleoprotein</keyword>
<keyword id="KW-0689">Ribosomal protein</keyword>
<proteinExistence type="inferred from homology"/>
<evidence type="ECO:0000255" key="1">
    <source>
        <dbReference type="HAMAP-Rule" id="MF_00508"/>
    </source>
</evidence>
<evidence type="ECO:0000305" key="2"/>
<comment type="function">
    <text evidence="1">Involved in the binding of tRNA to the ribosomes.</text>
</comment>
<comment type="subunit">
    <text evidence="1">Part of the 30S ribosomal subunit.</text>
</comment>
<comment type="similarity">
    <text evidence="1">Belongs to the universal ribosomal protein uS10 family.</text>
</comment>
<name>RS10_BORPE</name>
<accession>Q7VTD4</accession>
<protein>
    <recommendedName>
        <fullName evidence="1">Small ribosomal subunit protein uS10</fullName>
    </recommendedName>
    <alternativeName>
        <fullName evidence="2">30S ribosomal protein S10</fullName>
    </alternativeName>
</protein>
<dbReference type="EMBL" id="BX640422">
    <property type="protein sequence ID" value="CAE43870.1"/>
    <property type="molecule type" value="Genomic_DNA"/>
</dbReference>
<dbReference type="RefSeq" id="NP_882122.1">
    <property type="nucleotide sequence ID" value="NC_002929.2"/>
</dbReference>
<dbReference type="RefSeq" id="WP_003806903.1">
    <property type="nucleotide sequence ID" value="NZ_CP039022.1"/>
</dbReference>
<dbReference type="SMR" id="Q7VTD4"/>
<dbReference type="STRING" id="257313.BP3612"/>
<dbReference type="PaxDb" id="257313-BP3612"/>
<dbReference type="GeneID" id="94357755"/>
<dbReference type="KEGG" id="bpe:BP3612"/>
<dbReference type="PATRIC" id="fig|257313.5.peg.3910"/>
<dbReference type="eggNOG" id="COG0051">
    <property type="taxonomic scope" value="Bacteria"/>
</dbReference>
<dbReference type="HOGENOM" id="CLU_122625_1_3_4"/>
<dbReference type="PRO" id="PR:Q7VTD4"/>
<dbReference type="Proteomes" id="UP000002676">
    <property type="component" value="Chromosome"/>
</dbReference>
<dbReference type="GO" id="GO:1990904">
    <property type="term" value="C:ribonucleoprotein complex"/>
    <property type="evidence" value="ECO:0007669"/>
    <property type="project" value="UniProtKB-KW"/>
</dbReference>
<dbReference type="GO" id="GO:0005840">
    <property type="term" value="C:ribosome"/>
    <property type="evidence" value="ECO:0007669"/>
    <property type="project" value="UniProtKB-KW"/>
</dbReference>
<dbReference type="GO" id="GO:0003735">
    <property type="term" value="F:structural constituent of ribosome"/>
    <property type="evidence" value="ECO:0007669"/>
    <property type="project" value="InterPro"/>
</dbReference>
<dbReference type="GO" id="GO:0000049">
    <property type="term" value="F:tRNA binding"/>
    <property type="evidence" value="ECO:0007669"/>
    <property type="project" value="UniProtKB-UniRule"/>
</dbReference>
<dbReference type="GO" id="GO:0006412">
    <property type="term" value="P:translation"/>
    <property type="evidence" value="ECO:0007669"/>
    <property type="project" value="UniProtKB-UniRule"/>
</dbReference>
<dbReference type="FunFam" id="3.30.70.600:FF:000001">
    <property type="entry name" value="30S ribosomal protein S10"/>
    <property type="match status" value="1"/>
</dbReference>
<dbReference type="Gene3D" id="3.30.70.600">
    <property type="entry name" value="Ribosomal protein S10 domain"/>
    <property type="match status" value="1"/>
</dbReference>
<dbReference type="HAMAP" id="MF_00508">
    <property type="entry name" value="Ribosomal_uS10"/>
    <property type="match status" value="1"/>
</dbReference>
<dbReference type="InterPro" id="IPR001848">
    <property type="entry name" value="Ribosomal_uS10"/>
</dbReference>
<dbReference type="InterPro" id="IPR018268">
    <property type="entry name" value="Ribosomal_uS10_CS"/>
</dbReference>
<dbReference type="InterPro" id="IPR027486">
    <property type="entry name" value="Ribosomal_uS10_dom"/>
</dbReference>
<dbReference type="InterPro" id="IPR036838">
    <property type="entry name" value="Ribosomal_uS10_dom_sf"/>
</dbReference>
<dbReference type="NCBIfam" id="NF001861">
    <property type="entry name" value="PRK00596.1"/>
    <property type="match status" value="1"/>
</dbReference>
<dbReference type="NCBIfam" id="TIGR01049">
    <property type="entry name" value="rpsJ_bact"/>
    <property type="match status" value="1"/>
</dbReference>
<dbReference type="PANTHER" id="PTHR11700">
    <property type="entry name" value="30S RIBOSOMAL PROTEIN S10 FAMILY MEMBER"/>
    <property type="match status" value="1"/>
</dbReference>
<dbReference type="Pfam" id="PF00338">
    <property type="entry name" value="Ribosomal_S10"/>
    <property type="match status" value="1"/>
</dbReference>
<dbReference type="PRINTS" id="PR00971">
    <property type="entry name" value="RIBOSOMALS10"/>
</dbReference>
<dbReference type="SMART" id="SM01403">
    <property type="entry name" value="Ribosomal_S10"/>
    <property type="match status" value="1"/>
</dbReference>
<dbReference type="SUPFAM" id="SSF54999">
    <property type="entry name" value="Ribosomal protein S10"/>
    <property type="match status" value="1"/>
</dbReference>
<dbReference type="PROSITE" id="PS00361">
    <property type="entry name" value="RIBOSOMAL_S10"/>
    <property type="match status" value="1"/>
</dbReference>
<sequence>MKNQKIRIRLKAFDYKLIDQSAAEIVDTAKRTGAVVRGPVPLPTRIRRYDVLRSPHVNKTSRDQFEIRTHQRLMDIVDPTDKTVDALMRLDLPAGVDVEIALQ</sequence>
<gene>
    <name evidence="1" type="primary">rpsJ</name>
    <name type="ordered locus">BP3612</name>
</gene>
<organism>
    <name type="scientific">Bordetella pertussis (strain Tohama I / ATCC BAA-589 / NCTC 13251)</name>
    <dbReference type="NCBI Taxonomy" id="257313"/>
    <lineage>
        <taxon>Bacteria</taxon>
        <taxon>Pseudomonadati</taxon>
        <taxon>Pseudomonadota</taxon>
        <taxon>Betaproteobacteria</taxon>
        <taxon>Burkholderiales</taxon>
        <taxon>Alcaligenaceae</taxon>
        <taxon>Bordetella</taxon>
    </lineage>
</organism>